<organism>
    <name type="scientific">Mus musculus</name>
    <name type="common">Mouse</name>
    <dbReference type="NCBI Taxonomy" id="10090"/>
    <lineage>
        <taxon>Eukaryota</taxon>
        <taxon>Metazoa</taxon>
        <taxon>Chordata</taxon>
        <taxon>Craniata</taxon>
        <taxon>Vertebrata</taxon>
        <taxon>Euteleostomi</taxon>
        <taxon>Mammalia</taxon>
        <taxon>Eutheria</taxon>
        <taxon>Euarchontoglires</taxon>
        <taxon>Glires</taxon>
        <taxon>Rodentia</taxon>
        <taxon>Myomorpha</taxon>
        <taxon>Muroidea</taxon>
        <taxon>Muridae</taxon>
        <taxon>Murinae</taxon>
        <taxon>Mus</taxon>
        <taxon>Mus</taxon>
    </lineage>
</organism>
<evidence type="ECO:0000250" key="1">
    <source>
        <dbReference type="UniProtKB" id="Q9BZQ8"/>
    </source>
</evidence>
<evidence type="ECO:0000250" key="2">
    <source>
        <dbReference type="UniProtKB" id="Q9ESN0"/>
    </source>
</evidence>
<evidence type="ECO:0000255" key="3"/>
<evidence type="ECO:0000256" key="4">
    <source>
        <dbReference type="SAM" id="MobiDB-lite"/>
    </source>
</evidence>
<evidence type="ECO:0000269" key="5">
    <source>
    </source>
</evidence>
<evidence type="ECO:0000269" key="6">
    <source>
    </source>
</evidence>
<evidence type="ECO:0000303" key="7">
    <source>
    </source>
</evidence>
<evidence type="ECO:0000305" key="8"/>
<evidence type="ECO:0000312" key="9">
    <source>
        <dbReference type="EMBL" id="AAH21332.1"/>
    </source>
</evidence>
<evidence type="ECO:0000312" key="10">
    <source>
        <dbReference type="EMBL" id="AAH58234.2"/>
    </source>
</evidence>
<evidence type="ECO:0000312" key="11">
    <source>
        <dbReference type="EMBL" id="BAB17052.1"/>
    </source>
</evidence>
<evidence type="ECO:0000312" key="12">
    <source>
        <dbReference type="EMBL" id="BAC26641.1"/>
    </source>
</evidence>
<evidence type="ECO:0000312" key="13">
    <source>
        <dbReference type="EMBL" id="BAE23066.1"/>
    </source>
</evidence>
<evidence type="ECO:0000312" key="14">
    <source>
        <dbReference type="EMBL" id="BAE41736.1"/>
    </source>
</evidence>
<evidence type="ECO:0000312" key="15">
    <source>
        <dbReference type="MGI" id="MGI:2137237"/>
    </source>
</evidence>
<evidence type="ECO:0007744" key="16">
    <source>
    </source>
</evidence>
<evidence type="ECO:0007744" key="17">
    <source>
    </source>
</evidence>
<evidence type="ECO:0007744" key="18">
    <source>
    </source>
</evidence>
<name>NIBA1_MOUSE</name>
<proteinExistence type="evidence at protein level"/>
<gene>
    <name evidence="15" type="primary">Niban1</name>
    <name evidence="15" type="synonym">Fam129a</name>
    <name evidence="7" type="synonym">Niban</name>
</gene>
<dbReference type="EMBL" id="AK029847">
    <property type="protein sequence ID" value="BAC26641.1"/>
    <property type="status" value="ALT_SEQ"/>
    <property type="molecule type" value="mRNA"/>
</dbReference>
<dbReference type="EMBL" id="AK136597">
    <property type="protein sequence ID" value="BAE23066.1"/>
    <property type="molecule type" value="mRNA"/>
</dbReference>
<dbReference type="EMBL" id="AK170347">
    <property type="protein sequence ID" value="BAE41736.1"/>
    <property type="molecule type" value="mRNA"/>
</dbReference>
<dbReference type="EMBL" id="BC021332">
    <property type="protein sequence ID" value="AAH21332.1"/>
    <property type="status" value="ALT_SEQ"/>
    <property type="molecule type" value="mRNA"/>
</dbReference>
<dbReference type="EMBL" id="BC058234">
    <property type="protein sequence ID" value="AAH58234.2"/>
    <property type="status" value="ALT_INIT"/>
    <property type="molecule type" value="mRNA"/>
</dbReference>
<dbReference type="EMBL" id="BC137843">
    <property type="protein sequence ID" value="AAI37844.1"/>
    <property type="status" value="ALT_INIT"/>
    <property type="molecule type" value="mRNA"/>
</dbReference>
<dbReference type="EMBL" id="AB049355">
    <property type="protein sequence ID" value="BAB17052.1"/>
    <property type="status" value="ALT_INIT"/>
    <property type="molecule type" value="mRNA"/>
</dbReference>
<dbReference type="CCDS" id="CCDS48393.1"/>
<dbReference type="RefSeq" id="NP_071301.2">
    <property type="nucleotide sequence ID" value="NM_022018.4"/>
</dbReference>
<dbReference type="RefSeq" id="XP_006529839.1">
    <property type="nucleotide sequence ID" value="XM_006529776.3"/>
</dbReference>
<dbReference type="SMR" id="Q3UW53"/>
<dbReference type="BioGRID" id="211004">
    <property type="interactions" value="6"/>
</dbReference>
<dbReference type="FunCoup" id="Q3UW53">
    <property type="interactions" value="568"/>
</dbReference>
<dbReference type="IntAct" id="Q3UW53">
    <property type="interactions" value="1"/>
</dbReference>
<dbReference type="STRING" id="10090.ENSMUSP00000115822"/>
<dbReference type="iPTMnet" id="Q3UW53"/>
<dbReference type="PhosphoSitePlus" id="Q3UW53"/>
<dbReference type="SwissPalm" id="Q3UW53"/>
<dbReference type="jPOST" id="Q3UW53"/>
<dbReference type="PaxDb" id="10090-ENSMUSP00000115822"/>
<dbReference type="PeptideAtlas" id="Q3UW53"/>
<dbReference type="ProteomicsDB" id="293655"/>
<dbReference type="Antibodypedia" id="34451">
    <property type="antibodies" value="197 antibodies from 31 providers"/>
</dbReference>
<dbReference type="Ensembl" id="ENSMUST00000148810.8">
    <property type="protein sequence ID" value="ENSMUSP00000115822.2"/>
    <property type="gene ID" value="ENSMUSG00000026483.14"/>
</dbReference>
<dbReference type="GeneID" id="63913"/>
<dbReference type="KEGG" id="mmu:63913"/>
<dbReference type="UCSC" id="uc007cyz.2">
    <property type="organism name" value="mouse"/>
</dbReference>
<dbReference type="AGR" id="MGI:2137237"/>
<dbReference type="CTD" id="116496"/>
<dbReference type="MGI" id="MGI:2137237">
    <property type="gene designation" value="Niban1"/>
</dbReference>
<dbReference type="VEuPathDB" id="HostDB:ENSMUSG00000026483"/>
<dbReference type="eggNOG" id="ENOG502QVNR">
    <property type="taxonomic scope" value="Eukaryota"/>
</dbReference>
<dbReference type="GeneTree" id="ENSGT00940000154149"/>
<dbReference type="HOGENOM" id="CLU_009718_0_1_1"/>
<dbReference type="InParanoid" id="Q3UW53"/>
<dbReference type="OMA" id="VARVHEC"/>
<dbReference type="OrthoDB" id="9010513at2759"/>
<dbReference type="PhylomeDB" id="Q3UW53"/>
<dbReference type="TreeFam" id="TF333351"/>
<dbReference type="BioGRID-ORCS" id="63913">
    <property type="hits" value="2 hits in 79 CRISPR screens"/>
</dbReference>
<dbReference type="ChiTaRS" id="Fam129a">
    <property type="organism name" value="mouse"/>
</dbReference>
<dbReference type="PRO" id="PR:Q3UW53"/>
<dbReference type="Proteomes" id="UP000000589">
    <property type="component" value="Chromosome 1"/>
</dbReference>
<dbReference type="RNAct" id="Q3UW53">
    <property type="molecule type" value="protein"/>
</dbReference>
<dbReference type="Bgee" id="ENSMUSG00000026483">
    <property type="expression patterns" value="Expressed in iris and 193 other cell types or tissues"/>
</dbReference>
<dbReference type="ExpressionAtlas" id="Q3UW53">
    <property type="expression patterns" value="baseline and differential"/>
</dbReference>
<dbReference type="GO" id="GO:0005737">
    <property type="term" value="C:cytoplasm"/>
    <property type="evidence" value="ECO:0000250"/>
    <property type="project" value="UniProtKB"/>
</dbReference>
<dbReference type="GO" id="GO:0005829">
    <property type="term" value="C:cytosol"/>
    <property type="evidence" value="ECO:0007669"/>
    <property type="project" value="Ensembl"/>
</dbReference>
<dbReference type="GO" id="GO:0005886">
    <property type="term" value="C:plasma membrane"/>
    <property type="evidence" value="ECO:0007669"/>
    <property type="project" value="Ensembl"/>
</dbReference>
<dbReference type="GO" id="GO:0001933">
    <property type="term" value="P:negative regulation of protein phosphorylation"/>
    <property type="evidence" value="ECO:0000315"/>
    <property type="project" value="UniProtKB"/>
</dbReference>
<dbReference type="GO" id="GO:0001934">
    <property type="term" value="P:positive regulation of protein phosphorylation"/>
    <property type="evidence" value="ECO:0000315"/>
    <property type="project" value="UniProtKB"/>
</dbReference>
<dbReference type="GO" id="GO:0045727">
    <property type="term" value="P:positive regulation of translation"/>
    <property type="evidence" value="ECO:0000315"/>
    <property type="project" value="UniProtKB"/>
</dbReference>
<dbReference type="GO" id="GO:0034976">
    <property type="term" value="P:response to endoplasmic reticulum stress"/>
    <property type="evidence" value="ECO:0000314"/>
    <property type="project" value="UniProtKB"/>
</dbReference>
<dbReference type="CDD" id="cd23949">
    <property type="entry name" value="Niban-like"/>
    <property type="match status" value="1"/>
</dbReference>
<dbReference type="InterPro" id="IPR026088">
    <property type="entry name" value="Niban-like"/>
</dbReference>
<dbReference type="PANTHER" id="PTHR14392">
    <property type="entry name" value="NIBAN FAMILY MEMBER"/>
    <property type="match status" value="1"/>
</dbReference>
<dbReference type="PANTHER" id="PTHR14392:SF3">
    <property type="entry name" value="PROTEIN NIBAN 1"/>
    <property type="match status" value="1"/>
</dbReference>
<keyword id="KW-0963">Cytoplasm</keyword>
<keyword id="KW-0449">Lipoprotein</keyword>
<keyword id="KW-0472">Membrane</keyword>
<keyword id="KW-0519">Myristate</keyword>
<keyword id="KW-0597">Phosphoprotein</keyword>
<keyword id="KW-1185">Reference proteome</keyword>
<keyword id="KW-0346">Stress response</keyword>
<keyword id="KW-0810">Translation regulation</keyword>
<comment type="function">
    <text evidence="6">Regulates phosphorylation of a number of proteins involved in translation regulation including EIF2A, EIF4EBP1 and RPS6KB1. May be involved in the endoplasmic reticulum stress response.</text>
</comment>
<comment type="subcellular location">
    <subcellularLocation>
        <location evidence="2">Cytoplasm</location>
    </subcellularLocation>
    <subcellularLocation>
        <location evidence="1">Membrane</location>
        <topology evidence="1">Lipid-anchor</topology>
    </subcellularLocation>
</comment>
<comment type="induction">
    <text evidence="6">By endoplasmic reticulum stress-inducing agents such as tunicamycin and thapsigargin in liver, kidney and cerebrum.</text>
</comment>
<comment type="disruption phenotype">
    <text evidence="6">No obvious phenotypic abnormalities but mice show increased phosphorylation of Eif2a and decreased phosphorylation of Eif4ebp1 and Rps6kb1.</text>
</comment>
<comment type="miscellaneous">
    <text evidence="5">'Niban' means 'second' in Japanese.</text>
</comment>
<comment type="similarity">
    <text evidence="3">Belongs to the Niban family.</text>
</comment>
<comment type="sequence caution" evidence="8">
    <conflict type="miscellaneous discrepancy">
        <sequence resource="EMBL-CDS" id="AAH21332"/>
    </conflict>
    <text>Contaminating sequence. Potential poly-A sequence.</text>
</comment>
<comment type="sequence caution" evidence="8">
    <conflict type="erroneous initiation">
        <sequence resource="EMBL-CDS" id="AAH58234"/>
    </conflict>
    <text>Truncated N-terminus.</text>
</comment>
<comment type="sequence caution" evidence="8">
    <conflict type="erroneous initiation">
        <sequence resource="EMBL-CDS" id="AAI37844"/>
    </conflict>
    <text>Truncated N-terminus.</text>
</comment>
<comment type="sequence caution" evidence="8">
    <conflict type="erroneous initiation">
        <sequence resource="EMBL-CDS" id="BAB17052"/>
    </conflict>
    <text>Truncated N-terminus.</text>
</comment>
<comment type="sequence caution" evidence="8">
    <conflict type="miscellaneous discrepancy">
        <sequence resource="EMBL-CDS" id="BAC26641"/>
    </conflict>
    <text>Intron retention.</text>
</comment>
<protein>
    <recommendedName>
        <fullName evidence="8">Protein Niban 1</fullName>
    </recommendedName>
    <alternativeName>
        <fullName>Protein FAM129A</fullName>
    </alternativeName>
    <alternativeName>
        <fullName evidence="7">Protein Niban</fullName>
    </alternativeName>
</protein>
<reference evidence="13" key="1">
    <citation type="journal article" date="2005" name="Science">
        <title>The transcriptional landscape of the mammalian genome.</title>
        <authorList>
            <person name="Carninci P."/>
            <person name="Kasukawa T."/>
            <person name="Katayama S."/>
            <person name="Gough J."/>
            <person name="Frith M.C."/>
            <person name="Maeda N."/>
            <person name="Oyama R."/>
            <person name="Ravasi T."/>
            <person name="Lenhard B."/>
            <person name="Wells C."/>
            <person name="Kodzius R."/>
            <person name="Shimokawa K."/>
            <person name="Bajic V.B."/>
            <person name="Brenner S.E."/>
            <person name="Batalov S."/>
            <person name="Forrest A.R."/>
            <person name="Zavolan M."/>
            <person name="Davis M.J."/>
            <person name="Wilming L.G."/>
            <person name="Aidinis V."/>
            <person name="Allen J.E."/>
            <person name="Ambesi-Impiombato A."/>
            <person name="Apweiler R."/>
            <person name="Aturaliya R.N."/>
            <person name="Bailey T.L."/>
            <person name="Bansal M."/>
            <person name="Baxter L."/>
            <person name="Beisel K.W."/>
            <person name="Bersano T."/>
            <person name="Bono H."/>
            <person name="Chalk A.M."/>
            <person name="Chiu K.P."/>
            <person name="Choudhary V."/>
            <person name="Christoffels A."/>
            <person name="Clutterbuck D.R."/>
            <person name="Crowe M.L."/>
            <person name="Dalla E."/>
            <person name="Dalrymple B.P."/>
            <person name="de Bono B."/>
            <person name="Della Gatta G."/>
            <person name="di Bernardo D."/>
            <person name="Down T."/>
            <person name="Engstrom P."/>
            <person name="Fagiolini M."/>
            <person name="Faulkner G."/>
            <person name="Fletcher C.F."/>
            <person name="Fukushima T."/>
            <person name="Furuno M."/>
            <person name="Futaki S."/>
            <person name="Gariboldi M."/>
            <person name="Georgii-Hemming P."/>
            <person name="Gingeras T.R."/>
            <person name="Gojobori T."/>
            <person name="Green R.E."/>
            <person name="Gustincich S."/>
            <person name="Harbers M."/>
            <person name="Hayashi Y."/>
            <person name="Hensch T.K."/>
            <person name="Hirokawa N."/>
            <person name="Hill D."/>
            <person name="Huminiecki L."/>
            <person name="Iacono M."/>
            <person name="Ikeo K."/>
            <person name="Iwama A."/>
            <person name="Ishikawa T."/>
            <person name="Jakt M."/>
            <person name="Kanapin A."/>
            <person name="Katoh M."/>
            <person name="Kawasawa Y."/>
            <person name="Kelso J."/>
            <person name="Kitamura H."/>
            <person name="Kitano H."/>
            <person name="Kollias G."/>
            <person name="Krishnan S.P."/>
            <person name="Kruger A."/>
            <person name="Kummerfeld S.K."/>
            <person name="Kurochkin I.V."/>
            <person name="Lareau L.F."/>
            <person name="Lazarevic D."/>
            <person name="Lipovich L."/>
            <person name="Liu J."/>
            <person name="Liuni S."/>
            <person name="McWilliam S."/>
            <person name="Madan Babu M."/>
            <person name="Madera M."/>
            <person name="Marchionni L."/>
            <person name="Matsuda H."/>
            <person name="Matsuzawa S."/>
            <person name="Miki H."/>
            <person name="Mignone F."/>
            <person name="Miyake S."/>
            <person name="Morris K."/>
            <person name="Mottagui-Tabar S."/>
            <person name="Mulder N."/>
            <person name="Nakano N."/>
            <person name="Nakauchi H."/>
            <person name="Ng P."/>
            <person name="Nilsson R."/>
            <person name="Nishiguchi S."/>
            <person name="Nishikawa S."/>
            <person name="Nori F."/>
            <person name="Ohara O."/>
            <person name="Okazaki Y."/>
            <person name="Orlando V."/>
            <person name="Pang K.C."/>
            <person name="Pavan W.J."/>
            <person name="Pavesi G."/>
            <person name="Pesole G."/>
            <person name="Petrovsky N."/>
            <person name="Piazza S."/>
            <person name="Reed J."/>
            <person name="Reid J.F."/>
            <person name="Ring B.Z."/>
            <person name="Ringwald M."/>
            <person name="Rost B."/>
            <person name="Ruan Y."/>
            <person name="Salzberg S.L."/>
            <person name="Sandelin A."/>
            <person name="Schneider C."/>
            <person name="Schoenbach C."/>
            <person name="Sekiguchi K."/>
            <person name="Semple C.A."/>
            <person name="Seno S."/>
            <person name="Sessa L."/>
            <person name="Sheng Y."/>
            <person name="Shibata Y."/>
            <person name="Shimada H."/>
            <person name="Shimada K."/>
            <person name="Silva D."/>
            <person name="Sinclair B."/>
            <person name="Sperling S."/>
            <person name="Stupka E."/>
            <person name="Sugiura K."/>
            <person name="Sultana R."/>
            <person name="Takenaka Y."/>
            <person name="Taki K."/>
            <person name="Tammoja K."/>
            <person name="Tan S.L."/>
            <person name="Tang S."/>
            <person name="Taylor M.S."/>
            <person name="Tegner J."/>
            <person name="Teichmann S.A."/>
            <person name="Ueda H.R."/>
            <person name="van Nimwegen E."/>
            <person name="Verardo R."/>
            <person name="Wei C.L."/>
            <person name="Yagi K."/>
            <person name="Yamanishi H."/>
            <person name="Zabarovsky E."/>
            <person name="Zhu S."/>
            <person name="Zimmer A."/>
            <person name="Hide W."/>
            <person name="Bult C."/>
            <person name="Grimmond S.M."/>
            <person name="Teasdale R.D."/>
            <person name="Liu E.T."/>
            <person name="Brusic V."/>
            <person name="Quackenbush J."/>
            <person name="Wahlestedt C."/>
            <person name="Mattick J.S."/>
            <person name="Hume D.A."/>
            <person name="Kai C."/>
            <person name="Sasaki D."/>
            <person name="Tomaru Y."/>
            <person name="Fukuda S."/>
            <person name="Kanamori-Katayama M."/>
            <person name="Suzuki M."/>
            <person name="Aoki J."/>
            <person name="Arakawa T."/>
            <person name="Iida J."/>
            <person name="Imamura K."/>
            <person name="Itoh M."/>
            <person name="Kato T."/>
            <person name="Kawaji H."/>
            <person name="Kawagashira N."/>
            <person name="Kawashima T."/>
            <person name="Kojima M."/>
            <person name="Kondo S."/>
            <person name="Konno H."/>
            <person name="Nakano K."/>
            <person name="Ninomiya N."/>
            <person name="Nishio T."/>
            <person name="Okada M."/>
            <person name="Plessy C."/>
            <person name="Shibata K."/>
            <person name="Shiraki T."/>
            <person name="Suzuki S."/>
            <person name="Tagami M."/>
            <person name="Waki K."/>
            <person name="Watahiki A."/>
            <person name="Okamura-Oho Y."/>
            <person name="Suzuki H."/>
            <person name="Kawai J."/>
            <person name="Hayashizaki Y."/>
        </authorList>
    </citation>
    <scope>NUCLEOTIDE SEQUENCE [LARGE SCALE MRNA]</scope>
    <source>
        <strain evidence="13">C57BL/6J</strain>
        <strain evidence="14">NOD</strain>
        <tissue evidence="14">Dendritic cell</tissue>
        <tissue evidence="13">Epididymis</tissue>
        <tissue evidence="12">Testis</tissue>
    </source>
</reference>
<reference evidence="9" key="2">
    <citation type="journal article" date="2004" name="Genome Res.">
        <title>The status, quality, and expansion of the NIH full-length cDNA project: the Mammalian Gene Collection (MGC).</title>
        <authorList>
            <consortium name="The MGC Project Team"/>
        </authorList>
    </citation>
    <scope>NUCLEOTIDE SEQUENCE [LARGE SCALE MRNA]</scope>
    <source>
        <strain evidence="10">C57BL/6J</strain>
        <strain evidence="9">FVB/N-3</strain>
        <tissue evidence="9">Mammary tumor</tissue>
        <tissue evidence="10">Olfactory epithelium</tissue>
    </source>
</reference>
<reference evidence="8 11" key="3">
    <citation type="journal article" date="2000" name="Jpn. J. Cancer Res.">
        <title>A novel gene 'Niban' upregulated in renal carcinogenesis: cloning by the cDNA-amplified fragment length polymorphism approach.</title>
        <authorList>
            <person name="Majima S."/>
            <person name="Kajino K."/>
            <person name="Fukuda T."/>
            <person name="Otsuka F."/>
            <person name="Hino O."/>
        </authorList>
    </citation>
    <scope>NUCLEOTIDE SEQUENCE [MRNA] OF 2-926</scope>
</reference>
<reference evidence="8" key="4">
    <citation type="journal article" date="2007" name="Biochem. Biophys. Res. Commun.">
        <title>The endoplasmic reticulum stress-inducible protein Niban regulates eIF2alpha and S6K1/4E-BP1 phosphorylation.</title>
        <authorList>
            <person name="Sun G.D."/>
            <person name="Kobayashi T."/>
            <person name="Abe M."/>
            <person name="Tada N."/>
            <person name="Adachi H."/>
            <person name="Shiota A."/>
            <person name="Totsuka Y."/>
            <person name="Hino O."/>
        </authorList>
    </citation>
    <scope>FUNCTION</scope>
    <scope>INDUCTION</scope>
    <scope>DISRUPTION PHENOTYPE</scope>
</reference>
<reference key="5">
    <citation type="journal article" date="2007" name="Proc. Natl. Acad. Sci. U.S.A.">
        <title>Large-scale phosphorylation analysis of mouse liver.</title>
        <authorList>
            <person name="Villen J."/>
            <person name="Beausoleil S.A."/>
            <person name="Gerber S.A."/>
            <person name="Gygi S.P."/>
        </authorList>
    </citation>
    <scope>PHOSPHORYLATION [LARGE SCALE ANALYSIS] AT SER-601</scope>
    <scope>IDENTIFICATION BY MASS SPECTROMETRY [LARGE SCALE ANALYSIS]</scope>
    <source>
        <tissue>Liver</tissue>
    </source>
</reference>
<reference key="6">
    <citation type="journal article" date="2009" name="Immunity">
        <title>The phagosomal proteome in interferon-gamma-activated macrophages.</title>
        <authorList>
            <person name="Trost M."/>
            <person name="English L."/>
            <person name="Lemieux S."/>
            <person name="Courcelles M."/>
            <person name="Desjardins M."/>
            <person name="Thibault P."/>
        </authorList>
    </citation>
    <scope>PHOSPHORYLATION [LARGE SCALE ANALYSIS] AT SER-601</scope>
    <scope>IDENTIFICATION BY MASS SPECTROMETRY [LARGE SCALE ANALYSIS]</scope>
</reference>
<reference key="7">
    <citation type="journal article" date="2010" name="Cell">
        <title>A tissue-specific atlas of mouse protein phosphorylation and expression.</title>
        <authorList>
            <person name="Huttlin E.L."/>
            <person name="Jedrychowski M.P."/>
            <person name="Elias J.E."/>
            <person name="Goswami T."/>
            <person name="Rad R."/>
            <person name="Beausoleil S.A."/>
            <person name="Villen J."/>
            <person name="Haas W."/>
            <person name="Sowa M.E."/>
            <person name="Gygi S.P."/>
        </authorList>
    </citation>
    <scope>PHOSPHORYLATION [LARGE SCALE ANALYSIS] AT SER-578; SER-581; SER-595 AND SER-601</scope>
    <scope>IDENTIFICATION BY MASS SPECTROMETRY [LARGE SCALE ANALYSIS]</scope>
    <source>
        <tissue>Brain</tissue>
        <tissue>Brown adipose tissue</tissue>
        <tissue>Heart</tissue>
        <tissue>Kidney</tissue>
        <tissue>Liver</tissue>
        <tissue>Lung</tissue>
        <tissue>Pancreas</tissue>
        <tissue>Spleen</tissue>
        <tissue>Testis</tissue>
    </source>
</reference>
<accession>Q3UW53</accession>
<accession>A0PJB3</accession>
<accession>Q3TD68</accession>
<accession>Q6PE79</accession>
<accession>Q9ESL7</accession>
<sequence>MGGSASSQLDEGKCAYIRGKTEASIKNFSPYYSRQYSVAFCNHVRSEVEQQRDLTSQFLKTKPPLEPGTVLYEAELSQFAEDIRKWKDRYIVIKNDFAVESYESKEAYQRGAVPKSRILPAGGKVLTSEEEYSLLSDKHFPDPTASSEKNSQPFVLLPKAFPVYLWQPYLRHGYFCFHEAAEQQKFSALLNDCIRHLNHDYMKQTTFEAQAFLEAVQFFRQEKGHYGSWEMTTGDEVQVLSKLVMEELLPTLQTDLLPKLKGKKNDRKRAWFGLLEEAYNLVQHQVSEGLNALKEECRALTKDLEGTIRSDMDQIVTSKNFLTGKIRAMVAQPAEQCCGESVQPFLASILEELMGPVSSGFSEVRALFEKEVDELSQSFHATQDSAQLKEGLQQLMKLPLDSVKMEPCYTKVTLLPERLLDLQSRFRFPHVDLVVQRTQNYMQELMENAVFTFEQLLSPYLQGEASRIPVAIEKVKLRVLKQYDYDSSTIRKKIFQEALIQITLPTVQKALASTCKPELQKYEQFIFADHTNMIHVENVYEEILYEILLDETLKVITEAAILKKHNLFEDNMALPSESVSSLTDLKTAMGSNQASPARRVSAILPGAPDNELPSNEVFQEPEEKKEQPGVPGSLAISASSCPSGGDGQVSVDHSAGGPLTVENTAGPLSSHLSEVEAGGTLKDEEPTCQSPEPSAVPGSLKELKKLLTVTVSVESAPVVENDIHNGTPVPQENIKEEESKIHPEASHPAAIQQDSCEEREVREKEAQPLEAEAPGVDLGILPEGRGSTSQSTSGGLTENTSCPGPIEEPFEAQEPAEKVLPAIVSTEDSPQAGGEAEHSVTVTPQEDATLSSNPICPMESNEVAQASGDQEVLGGEDSSALGMDTEQVNDTHEHACQWLVEDTLSTDILAVHDFDVSSPEQPSEEW</sequence>
<feature type="initiator methionine" description="Removed" evidence="1">
    <location>
        <position position="1"/>
    </location>
</feature>
<feature type="chain" id="PRO_0000355583" description="Protein Niban 1">
    <location>
        <begin position="2"/>
        <end position="926"/>
    </location>
</feature>
<feature type="region of interest" description="Disordered" evidence="4">
    <location>
        <begin position="604"/>
        <end position="699"/>
    </location>
</feature>
<feature type="region of interest" description="Disordered" evidence="4">
    <location>
        <begin position="719"/>
        <end position="889"/>
    </location>
</feature>
<feature type="compositionally biased region" description="Polar residues" evidence="4">
    <location>
        <begin position="661"/>
        <end position="672"/>
    </location>
</feature>
<feature type="compositionally biased region" description="Basic and acidic residues" evidence="4">
    <location>
        <begin position="733"/>
        <end position="745"/>
    </location>
</feature>
<feature type="compositionally biased region" description="Basic and acidic residues" evidence="4">
    <location>
        <begin position="756"/>
        <end position="767"/>
    </location>
</feature>
<feature type="compositionally biased region" description="Low complexity" evidence="4">
    <location>
        <begin position="784"/>
        <end position="797"/>
    </location>
</feature>
<feature type="compositionally biased region" description="Polar residues" evidence="4">
    <location>
        <begin position="840"/>
        <end position="854"/>
    </location>
</feature>
<feature type="modified residue" description="Phosphoserine" evidence="18">
    <location>
        <position position="578"/>
    </location>
</feature>
<feature type="modified residue" description="Phosphoserine" evidence="18">
    <location>
        <position position="581"/>
    </location>
</feature>
<feature type="modified residue" description="Phosphoserine" evidence="18">
    <location>
        <position position="595"/>
    </location>
</feature>
<feature type="modified residue" description="Phosphoserine" evidence="16 17 18">
    <location>
        <position position="601"/>
    </location>
</feature>
<feature type="modified residue" description="Phosphoserine" evidence="1">
    <location>
        <position position="640"/>
    </location>
</feature>
<feature type="modified residue" description="Phosphoserine" evidence="1">
    <location>
        <position position="699"/>
    </location>
</feature>
<feature type="modified residue" description="Phosphoserine" evidence="2">
    <location>
        <position position="755"/>
    </location>
</feature>
<feature type="modified residue" description="Phosphoserine" evidence="1">
    <location>
        <position position="923"/>
    </location>
</feature>
<feature type="lipid moiety-binding region" description="N-myristoyl glycine" evidence="1">
    <location>
        <position position="2"/>
    </location>
</feature>
<feature type="sequence conflict" description="In Ref. 3; BAB17052." evidence="8" ref="3">
    <original>GGS</original>
    <variation>ASA</variation>
    <location>
        <begin position="2"/>
        <end position="4"/>
    </location>
</feature>
<feature type="sequence conflict" description="In Ref. 2; AAH21332." evidence="8" ref="2">
    <original>R</original>
    <variation>G</variation>
    <location>
        <position position="437"/>
    </location>
</feature>
<feature type="sequence conflict" description="In Ref. 1; BAE41736." evidence="8" ref="1">
    <original>P</original>
    <variation>Q</variation>
    <location>
        <position position="608"/>
    </location>
</feature>
<feature type="sequence conflict" description="In Ref. 2; AAH21332." evidence="8" ref="2">
    <original>V</original>
    <variation>E</variation>
    <location>
        <position position="651"/>
    </location>
</feature>
<feature type="sequence conflict" description="In Ref. 2; AAH21332." evidence="8" ref="2">
    <original>T</original>
    <variation>S</variation>
    <location>
        <position position="680"/>
    </location>
</feature>
<feature type="sequence conflict" description="In Ref. 2; AAH21332." evidence="8" ref="2">
    <original>P</original>
    <variation>S</variation>
    <location>
        <position position="693"/>
    </location>
</feature>
<feature type="sequence conflict" description="In Ref. 2; AAH21332." evidence="8" ref="2">
    <original>K</original>
    <variation>E</variation>
    <location>
        <position position="705"/>
    </location>
</feature>
<feature type="sequence conflict" description="In Ref. 1; BAE23066." evidence="8" ref="1">
    <original>V</original>
    <variation>L</variation>
    <location>
        <position position="911"/>
    </location>
</feature>